<reference key="1">
    <citation type="journal article" date="2004" name="Nucleic Acids Res.">
        <title>Comparative analysis of the Borrelia garinii genome.</title>
        <authorList>
            <person name="Gloeckner G."/>
            <person name="Lehmann R."/>
            <person name="Romualdi A."/>
            <person name="Pradella S."/>
            <person name="Schulte-Spechtel U."/>
            <person name="Schilhabel M."/>
            <person name="Wilske B."/>
            <person name="Suehnel J."/>
            <person name="Platzer M."/>
        </authorList>
    </citation>
    <scope>NUCLEOTIDE SEQUENCE [LARGE SCALE GENOMIC DNA]</scope>
    <source>
        <strain>ATCC BAA-2496 / DSM 23469 / PBi</strain>
    </source>
</reference>
<feature type="chain" id="PRO_0000151115" description="Undecaprenyl-diphosphatase">
    <location>
        <begin position="1"/>
        <end position="266"/>
    </location>
</feature>
<feature type="transmembrane region" description="Helical" evidence="1">
    <location>
        <begin position="2"/>
        <end position="22"/>
    </location>
</feature>
<feature type="transmembrane region" description="Helical" evidence="1">
    <location>
        <begin position="39"/>
        <end position="59"/>
    </location>
</feature>
<feature type="transmembrane region" description="Helical" evidence="1">
    <location>
        <begin position="86"/>
        <end position="106"/>
    </location>
</feature>
<feature type="transmembrane region" description="Helical" evidence="1">
    <location>
        <begin position="112"/>
        <end position="132"/>
    </location>
</feature>
<feature type="transmembrane region" description="Helical" evidence="1">
    <location>
        <begin position="145"/>
        <end position="165"/>
    </location>
</feature>
<feature type="transmembrane region" description="Helical" evidence="1">
    <location>
        <begin position="184"/>
        <end position="204"/>
    </location>
</feature>
<feature type="transmembrane region" description="Helical" evidence="1">
    <location>
        <begin position="212"/>
        <end position="232"/>
    </location>
</feature>
<feature type="transmembrane region" description="Helical" evidence="1">
    <location>
        <begin position="246"/>
        <end position="266"/>
    </location>
</feature>
<accession>Q662A7</accession>
<gene>
    <name evidence="1" type="primary">uppP</name>
    <name type="synonym">bacA</name>
    <name type="ordered locus">BG0261</name>
</gene>
<dbReference type="EC" id="3.6.1.27" evidence="1"/>
<dbReference type="EMBL" id="CP000013">
    <property type="protein sequence ID" value="AAU07114.1"/>
    <property type="molecule type" value="Genomic_DNA"/>
</dbReference>
<dbReference type="RefSeq" id="WP_011193597.1">
    <property type="nucleotide sequence ID" value="NZ_CP028872.1"/>
</dbReference>
<dbReference type="SMR" id="Q662A7"/>
<dbReference type="GeneID" id="45161051"/>
<dbReference type="KEGG" id="bga:BG0261"/>
<dbReference type="eggNOG" id="COG1968">
    <property type="taxonomic scope" value="Bacteria"/>
</dbReference>
<dbReference type="HOGENOM" id="CLU_060296_2_0_12"/>
<dbReference type="OrthoDB" id="9808289at2"/>
<dbReference type="Proteomes" id="UP000002276">
    <property type="component" value="Chromosome"/>
</dbReference>
<dbReference type="GO" id="GO:0005886">
    <property type="term" value="C:plasma membrane"/>
    <property type="evidence" value="ECO:0007669"/>
    <property type="project" value="UniProtKB-SubCell"/>
</dbReference>
<dbReference type="GO" id="GO:0050380">
    <property type="term" value="F:undecaprenyl-diphosphatase activity"/>
    <property type="evidence" value="ECO:0007669"/>
    <property type="project" value="UniProtKB-UniRule"/>
</dbReference>
<dbReference type="GO" id="GO:0071555">
    <property type="term" value="P:cell wall organization"/>
    <property type="evidence" value="ECO:0007669"/>
    <property type="project" value="UniProtKB-KW"/>
</dbReference>
<dbReference type="GO" id="GO:0009252">
    <property type="term" value="P:peptidoglycan biosynthetic process"/>
    <property type="evidence" value="ECO:0007669"/>
    <property type="project" value="UniProtKB-KW"/>
</dbReference>
<dbReference type="GO" id="GO:0008360">
    <property type="term" value="P:regulation of cell shape"/>
    <property type="evidence" value="ECO:0007669"/>
    <property type="project" value="UniProtKB-KW"/>
</dbReference>
<dbReference type="GO" id="GO:0046677">
    <property type="term" value="P:response to antibiotic"/>
    <property type="evidence" value="ECO:0007669"/>
    <property type="project" value="UniProtKB-UniRule"/>
</dbReference>
<dbReference type="HAMAP" id="MF_01006">
    <property type="entry name" value="Undec_diphosphatase"/>
    <property type="match status" value="1"/>
</dbReference>
<dbReference type="InterPro" id="IPR003824">
    <property type="entry name" value="UppP"/>
</dbReference>
<dbReference type="NCBIfam" id="NF001396">
    <property type="entry name" value="PRK00281.3-3"/>
    <property type="match status" value="1"/>
</dbReference>
<dbReference type="NCBIfam" id="TIGR00753">
    <property type="entry name" value="undec_PP_bacA"/>
    <property type="match status" value="1"/>
</dbReference>
<dbReference type="PANTHER" id="PTHR30622">
    <property type="entry name" value="UNDECAPRENYL-DIPHOSPHATASE"/>
    <property type="match status" value="1"/>
</dbReference>
<dbReference type="PANTHER" id="PTHR30622:SF2">
    <property type="entry name" value="UNDECAPRENYL-DIPHOSPHATASE"/>
    <property type="match status" value="1"/>
</dbReference>
<dbReference type="Pfam" id="PF02673">
    <property type="entry name" value="BacA"/>
    <property type="match status" value="1"/>
</dbReference>
<proteinExistence type="inferred from homology"/>
<organism>
    <name type="scientific">Borrelia garinii subsp. bavariensis (strain ATCC BAA-2496 / DSM 23469 / PBi)</name>
    <name type="common">Borreliella bavariensis</name>
    <dbReference type="NCBI Taxonomy" id="290434"/>
    <lineage>
        <taxon>Bacteria</taxon>
        <taxon>Pseudomonadati</taxon>
        <taxon>Spirochaetota</taxon>
        <taxon>Spirochaetia</taxon>
        <taxon>Spirochaetales</taxon>
        <taxon>Borreliaceae</taxon>
        <taxon>Borreliella</taxon>
    </lineage>
</organism>
<evidence type="ECO:0000255" key="1">
    <source>
        <dbReference type="HAMAP-Rule" id="MF_01006"/>
    </source>
</evidence>
<sequence length="266" mass="30609">MINILNAIILGIVQGITEFLPISSSGHLLLFRHFMHLKLPIIFDIYLHLATVLVIIIYYRQRILELFLTFIRFSLRKTNKSDLTNLKLILLILIITIVTGVVGTFISKYERMFILPFILINFIITGILILMLEFNFFKIDFKGNILLVGIFIGLMQGLGAFPGISRSGITIFSAVSLGFNRKSAFEISFLSLIPIVFGAILFKYKEFYDIFMVLNFFEINLGALVAFVVGIISINFFFKMLNNKKLYYFSIYLFALSITFCCFFRI</sequence>
<keyword id="KW-0046">Antibiotic resistance</keyword>
<keyword id="KW-0997">Cell inner membrane</keyword>
<keyword id="KW-1003">Cell membrane</keyword>
<keyword id="KW-0133">Cell shape</keyword>
<keyword id="KW-0961">Cell wall biogenesis/degradation</keyword>
<keyword id="KW-0378">Hydrolase</keyword>
<keyword id="KW-0472">Membrane</keyword>
<keyword id="KW-0573">Peptidoglycan synthesis</keyword>
<keyword id="KW-0812">Transmembrane</keyword>
<keyword id="KW-1133">Transmembrane helix</keyword>
<name>UPPP_BORGP</name>
<comment type="function">
    <text evidence="1">Catalyzes the dephosphorylation of undecaprenyl diphosphate (UPP). Confers resistance to bacitracin.</text>
</comment>
<comment type="catalytic activity">
    <reaction evidence="1">
        <text>di-trans,octa-cis-undecaprenyl diphosphate + H2O = di-trans,octa-cis-undecaprenyl phosphate + phosphate + H(+)</text>
        <dbReference type="Rhea" id="RHEA:28094"/>
        <dbReference type="ChEBI" id="CHEBI:15377"/>
        <dbReference type="ChEBI" id="CHEBI:15378"/>
        <dbReference type="ChEBI" id="CHEBI:43474"/>
        <dbReference type="ChEBI" id="CHEBI:58405"/>
        <dbReference type="ChEBI" id="CHEBI:60392"/>
        <dbReference type="EC" id="3.6.1.27"/>
    </reaction>
</comment>
<comment type="subcellular location">
    <subcellularLocation>
        <location evidence="1">Cell inner membrane</location>
        <topology evidence="1">Multi-pass membrane protein</topology>
    </subcellularLocation>
</comment>
<comment type="miscellaneous">
    <text>Bacitracin is thought to be involved in the inhibition of peptidoglycan synthesis by sequestering undecaprenyl diphosphate, thereby reducing the pool of lipid carrier available.</text>
</comment>
<comment type="similarity">
    <text evidence="1">Belongs to the UppP family.</text>
</comment>
<protein>
    <recommendedName>
        <fullName evidence="1">Undecaprenyl-diphosphatase</fullName>
        <ecNumber evidence="1">3.6.1.27</ecNumber>
    </recommendedName>
    <alternativeName>
        <fullName evidence="1">Bacitracin resistance protein</fullName>
    </alternativeName>
    <alternativeName>
        <fullName evidence="1">Undecaprenyl pyrophosphate phosphatase</fullName>
    </alternativeName>
</protein>